<sequence length="70" mass="7390">MATFSLGKHPHVELCDLLKLEGWSESGAQAKIAIAEGQVKVDGAVETRKRCKIVAGQTVSFAGHSVQVVA</sequence>
<comment type="function">
    <text evidence="5">Its structure and the presence of conserved basic residues indicates that it probably binds RNA.</text>
</comment>
<comment type="subunit">
    <text evidence="2">In pull-down experiments interacts with CedA.</text>
</comment>
<comment type="sequence caution" evidence="4">
    <conflict type="erroneous initiation">
        <sequence resource="EMBL-CDS" id="AAB40281"/>
    </conflict>
    <text>Extended N-terminus.</text>
</comment>
<comment type="sequence caution" evidence="4">
    <conflict type="frameshift" ref="1"/>
</comment>
<gene>
    <name type="primary">ybcJ</name>
    <name type="ordered locus">b0528</name>
    <name type="ordered locus">JW5070</name>
</gene>
<reference key="1">
    <citation type="submission" date="1992-07" db="EMBL/GenBank/DDBJ databases">
        <title>Cloning and nucleotide sequence analysis of a novel adenine-sensitive mutation of Escherichia coli strain K-12 W3110.</title>
        <authorList>
            <person name="Yonetani Y."/>
            <person name="Sanpei G."/>
            <person name="Mizobuchi K."/>
        </authorList>
    </citation>
    <scope>NUCLEOTIDE SEQUENCE [GENOMIC DNA]</scope>
    <source>
        <strain>K12 / W3110 / ATCC 27325 / DSM 5911</strain>
    </source>
</reference>
<reference key="2">
    <citation type="submission" date="1997-01" db="EMBL/GenBank/DDBJ databases">
        <title>Sequence of minutes 4-25 of Escherichia coli.</title>
        <authorList>
            <person name="Chung E."/>
            <person name="Allen E."/>
            <person name="Araujo R."/>
            <person name="Aparicio A.M."/>
            <person name="Davis K."/>
            <person name="Duncan M."/>
            <person name="Federspiel N."/>
            <person name="Hyman R."/>
            <person name="Kalman S."/>
            <person name="Komp C."/>
            <person name="Kurdi O."/>
            <person name="Lew H."/>
            <person name="Lin D."/>
            <person name="Namath A."/>
            <person name="Oefner P."/>
            <person name="Roberts D."/>
            <person name="Schramm S."/>
            <person name="Davis R.W."/>
        </authorList>
    </citation>
    <scope>NUCLEOTIDE SEQUENCE [LARGE SCALE GENOMIC DNA]</scope>
    <source>
        <strain>K12 / MG1655 / ATCC 47076</strain>
    </source>
</reference>
<reference key="3">
    <citation type="journal article" date="1997" name="Science">
        <title>The complete genome sequence of Escherichia coli K-12.</title>
        <authorList>
            <person name="Blattner F.R."/>
            <person name="Plunkett G. III"/>
            <person name="Bloch C.A."/>
            <person name="Perna N.T."/>
            <person name="Burland V."/>
            <person name="Riley M."/>
            <person name="Collado-Vides J."/>
            <person name="Glasner J.D."/>
            <person name="Rode C.K."/>
            <person name="Mayhew G.F."/>
            <person name="Gregor J."/>
            <person name="Davis N.W."/>
            <person name="Kirkpatrick H.A."/>
            <person name="Goeden M.A."/>
            <person name="Rose D.J."/>
            <person name="Mau B."/>
            <person name="Shao Y."/>
        </authorList>
    </citation>
    <scope>NUCLEOTIDE SEQUENCE [LARGE SCALE GENOMIC DNA]</scope>
    <source>
        <strain>K12 / MG1655 / ATCC 47076</strain>
    </source>
</reference>
<reference key="4">
    <citation type="journal article" date="2006" name="Mol. Syst. Biol.">
        <title>Highly accurate genome sequences of Escherichia coli K-12 strains MG1655 and W3110.</title>
        <authorList>
            <person name="Hayashi K."/>
            <person name="Morooka N."/>
            <person name="Yamamoto Y."/>
            <person name="Fujita K."/>
            <person name="Isono K."/>
            <person name="Choi S."/>
            <person name="Ohtsubo E."/>
            <person name="Baba T."/>
            <person name="Wanner B.L."/>
            <person name="Mori H."/>
            <person name="Horiuchi T."/>
        </authorList>
    </citation>
    <scope>NUCLEOTIDE SEQUENCE [LARGE SCALE GENOMIC DNA]</scope>
    <source>
        <strain>K12 / W3110 / ATCC 27325 / DSM 5911</strain>
    </source>
</reference>
<reference key="5">
    <citation type="journal article" date="1991" name="J. Biol. Chem.">
        <title>Purification, characterization, cloning, and amino acid sequence of the bifunctional enzyme 5,10-methylenetetrahydrofolate dehydrogenase/5,10-methenyltetrahydrofolate cyclohydrolase from Escherichia coli.</title>
        <authorList>
            <person name="D'Ari L."/>
            <person name="Rabinowitz J.C."/>
        </authorList>
    </citation>
    <scope>NUCLEOTIDE SEQUENCE [GENOMIC DNA] OF 1-25</scope>
</reference>
<reference key="6">
    <citation type="journal article" date="1995" name="Nucleic Acids Res.">
        <title>Detection of new genes in a bacterial genome using Markov models for three gene classes.</title>
        <authorList>
            <person name="Borodovsky M."/>
            <person name="McIninch J."/>
            <person name="Koonin E.V."/>
            <person name="Rudd K.E."/>
            <person name="Medigue C."/>
            <person name="Danchin A."/>
        </authorList>
    </citation>
    <scope>IDENTIFICATION</scope>
</reference>
<reference key="7">
    <citation type="journal article" date="2018" name="Int. J. Biol. Macromol.">
        <title>Identification of functional interactome of a key cell division regulatory protein CedA of E.coli.</title>
        <authorList>
            <person name="Sharma P."/>
            <person name="Tomar A.K."/>
            <person name="Kundu B."/>
        </authorList>
    </citation>
    <scope>IDENTIFICATION BY MASS SPECTROMETRY</scope>
    <scope>INTERACTION WITH CEDA</scope>
</reference>
<reference evidence="6" key="8">
    <citation type="journal article" date="2003" name="J. Bacteriol.">
        <title>The solution structure of YbcJ from Escherichia coli reveals a recently discovered alphaL motif involved in RNA binding.</title>
        <authorList>
            <person name="Volpon L."/>
            <person name="Lievre C."/>
            <person name="Osborne M.J."/>
            <person name="Gandhi S."/>
            <person name="Iannuzzi P."/>
            <person name="Larocque R."/>
            <person name="Cygler M."/>
            <person name="Gehring K."/>
            <person name="Ekiel I."/>
        </authorList>
    </citation>
    <scope>STRUCTURE BY NMR</scope>
    <scope>PROPOSED FUNCTION</scope>
    <source>
        <strain>K12 / MC1061 / ATCC 53338 / DSM 7140</strain>
    </source>
</reference>
<feature type="chain" id="PRO_0000168649" description="Putative RNA-binding protein YbcJ">
    <location>
        <begin position="1"/>
        <end position="70"/>
    </location>
</feature>
<feature type="domain" description="S4 RNA-binding" evidence="1">
    <location>
        <begin position="12"/>
        <end position="68"/>
    </location>
</feature>
<feature type="strand" evidence="7">
    <location>
        <begin position="3"/>
        <end position="5"/>
    </location>
</feature>
<feature type="helix" evidence="7">
    <location>
        <begin position="14"/>
        <end position="21"/>
    </location>
</feature>
<feature type="strand" evidence="7">
    <location>
        <begin position="25"/>
        <end position="28"/>
    </location>
</feature>
<feature type="helix" evidence="7">
    <location>
        <begin position="32"/>
        <end position="39"/>
    </location>
</feature>
<feature type="strand" evidence="7">
    <location>
        <begin position="55"/>
        <end position="61"/>
    </location>
</feature>
<feature type="strand" evidence="7">
    <location>
        <begin position="64"/>
        <end position="69"/>
    </location>
</feature>
<name>YBCJ_ECOLI</name>
<protein>
    <recommendedName>
        <fullName evidence="3 4">Putative RNA-binding protein YbcJ</fullName>
    </recommendedName>
</protein>
<keyword id="KW-0002">3D-structure</keyword>
<keyword id="KW-1185">Reference proteome</keyword>
<keyword id="KW-0694">RNA-binding</keyword>
<accession>P0AAS7</accession>
<accession>P45571</accession>
<accession>P77661</accession>
<accession>Q2MBQ1</accession>
<organism>
    <name type="scientific">Escherichia coli (strain K12)</name>
    <dbReference type="NCBI Taxonomy" id="83333"/>
    <lineage>
        <taxon>Bacteria</taxon>
        <taxon>Pseudomonadati</taxon>
        <taxon>Pseudomonadota</taxon>
        <taxon>Gammaproteobacteria</taxon>
        <taxon>Enterobacterales</taxon>
        <taxon>Enterobacteriaceae</taxon>
        <taxon>Escherichia</taxon>
    </lineage>
</organism>
<dbReference type="EMBL" id="D10588">
    <property type="status" value="NOT_ANNOTATED_CDS"/>
    <property type="molecule type" value="Genomic_DNA"/>
</dbReference>
<dbReference type="EMBL" id="U82664">
    <property type="protein sequence ID" value="AAB40281.1"/>
    <property type="status" value="ALT_INIT"/>
    <property type="molecule type" value="Genomic_DNA"/>
</dbReference>
<dbReference type="EMBL" id="U00096">
    <property type="protein sequence ID" value="AAC73630.2"/>
    <property type="molecule type" value="Genomic_DNA"/>
</dbReference>
<dbReference type="EMBL" id="AP009048">
    <property type="protein sequence ID" value="BAE76305.1"/>
    <property type="molecule type" value="Genomic_DNA"/>
</dbReference>
<dbReference type="EMBL" id="M74789">
    <property type="status" value="NOT_ANNOTATED_CDS"/>
    <property type="molecule type" value="Genomic_DNA"/>
</dbReference>
<dbReference type="PIR" id="G64784">
    <property type="entry name" value="G64784"/>
</dbReference>
<dbReference type="RefSeq" id="NP_415061.2">
    <property type="nucleotide sequence ID" value="NC_000913.3"/>
</dbReference>
<dbReference type="RefSeq" id="WP_000190288.1">
    <property type="nucleotide sequence ID" value="NZ_STEB01000007.1"/>
</dbReference>
<dbReference type="PDB" id="1P9K">
    <property type="method" value="NMR"/>
    <property type="chains" value="A=1-70"/>
</dbReference>
<dbReference type="PDBsum" id="1P9K"/>
<dbReference type="BMRB" id="P0AAS7"/>
<dbReference type="SMR" id="P0AAS7"/>
<dbReference type="BioGRID" id="4262818">
    <property type="interactions" value="35"/>
</dbReference>
<dbReference type="DIP" id="DIP-47878N"/>
<dbReference type="FunCoup" id="P0AAS7">
    <property type="interactions" value="113"/>
</dbReference>
<dbReference type="IntAct" id="P0AAS7">
    <property type="interactions" value="56"/>
</dbReference>
<dbReference type="STRING" id="511145.b0528"/>
<dbReference type="jPOST" id="P0AAS7"/>
<dbReference type="PaxDb" id="511145-b0528"/>
<dbReference type="EnsemblBacteria" id="AAC73630">
    <property type="protein sequence ID" value="AAC73630"/>
    <property type="gene ID" value="b0528"/>
</dbReference>
<dbReference type="GeneID" id="86945443"/>
<dbReference type="GeneID" id="945158"/>
<dbReference type="KEGG" id="ecj:JW5070"/>
<dbReference type="KEGG" id="eco:b0528"/>
<dbReference type="KEGG" id="ecoc:C3026_02590"/>
<dbReference type="PATRIC" id="fig|1411691.4.peg.1750"/>
<dbReference type="EchoBASE" id="EB2717"/>
<dbReference type="eggNOG" id="COG2501">
    <property type="taxonomic scope" value="Bacteria"/>
</dbReference>
<dbReference type="HOGENOM" id="CLU_127162_1_2_6"/>
<dbReference type="InParanoid" id="P0AAS7"/>
<dbReference type="OMA" id="QGWSESG"/>
<dbReference type="OrthoDB" id="9802835at2"/>
<dbReference type="PhylomeDB" id="P0AAS7"/>
<dbReference type="BioCyc" id="EcoCyc:EG12879-MONOMER"/>
<dbReference type="EvolutionaryTrace" id="P0AAS7"/>
<dbReference type="PRO" id="PR:P0AAS7"/>
<dbReference type="Proteomes" id="UP000000625">
    <property type="component" value="Chromosome"/>
</dbReference>
<dbReference type="GO" id="GO:0005829">
    <property type="term" value="C:cytosol"/>
    <property type="evidence" value="ECO:0000314"/>
    <property type="project" value="EcoCyc"/>
</dbReference>
<dbReference type="GO" id="GO:0003723">
    <property type="term" value="F:RNA binding"/>
    <property type="evidence" value="ECO:0000250"/>
    <property type="project" value="EcoCyc"/>
</dbReference>
<dbReference type="GO" id="GO:0006412">
    <property type="term" value="P:translation"/>
    <property type="evidence" value="ECO:0000315"/>
    <property type="project" value="EcoCyc"/>
</dbReference>
<dbReference type="CDD" id="cd00165">
    <property type="entry name" value="S4"/>
    <property type="match status" value="1"/>
</dbReference>
<dbReference type="FunFam" id="3.10.290.10:FF:000013">
    <property type="entry name" value="Ribosome-associated protein YbcJ"/>
    <property type="match status" value="1"/>
</dbReference>
<dbReference type="Gene3D" id="3.10.290.10">
    <property type="entry name" value="RNA-binding S4 domain"/>
    <property type="match status" value="1"/>
</dbReference>
<dbReference type="InterPro" id="IPR036986">
    <property type="entry name" value="S4_RNA-bd_sf"/>
</dbReference>
<dbReference type="NCBIfam" id="NF008561">
    <property type="entry name" value="PRK11507.1"/>
    <property type="match status" value="1"/>
</dbReference>
<dbReference type="Pfam" id="PF13275">
    <property type="entry name" value="S4_2"/>
    <property type="match status" value="1"/>
</dbReference>
<dbReference type="SUPFAM" id="SSF55174">
    <property type="entry name" value="Alpha-L RNA-binding motif"/>
    <property type="match status" value="1"/>
</dbReference>
<dbReference type="PROSITE" id="PS50889">
    <property type="entry name" value="S4"/>
    <property type="match status" value="1"/>
</dbReference>
<evidence type="ECO:0000255" key="1">
    <source>
        <dbReference type="PROSITE-ProRule" id="PRU00182"/>
    </source>
</evidence>
<evidence type="ECO:0000269" key="2">
    <source>
    </source>
</evidence>
<evidence type="ECO:0000303" key="3">
    <source>
    </source>
</evidence>
<evidence type="ECO:0000305" key="4"/>
<evidence type="ECO:0000305" key="5">
    <source>
    </source>
</evidence>
<evidence type="ECO:0000312" key="6">
    <source>
        <dbReference type="PDB" id="1P9K"/>
    </source>
</evidence>
<evidence type="ECO:0007829" key="7">
    <source>
        <dbReference type="PDB" id="1P9K"/>
    </source>
</evidence>
<proteinExistence type="evidence at protein level"/>